<protein>
    <recommendedName>
        <fullName evidence="2">HTH-type transcriptional regulator BetI</fullName>
    </recommendedName>
</protein>
<sequence length="196" mass="21893">MPKVGMQPIRRSQLIAATLEAVDQVGMADASIAYIARLAGVSNGIISHYFNDKNGLLEATMRHLMQALSAAVGKRRRALDEDSPRAHLRAMIDGNFDDSQVSGPAMKTWLAFWASSMHQPALRRLQRVNDHRLYSNLCGQFRRVLPQDQARFAARGLASLIDGLWLRGALSGEAFDTEQARRIAYDYLDLQLNKAR</sequence>
<name>BETI_ECTM1</name>
<proteinExistence type="inferred from homology"/>
<feature type="chain" id="PRO_1000083567" description="HTH-type transcriptional regulator BetI">
    <location>
        <begin position="1"/>
        <end position="196"/>
    </location>
</feature>
<feature type="domain" description="HTH tetR-type" evidence="2">
    <location>
        <begin position="8"/>
        <end position="68"/>
    </location>
</feature>
<feature type="DNA-binding region" description="H-T-H motif" evidence="2">
    <location>
        <begin position="31"/>
        <end position="50"/>
    </location>
</feature>
<reference key="1">
    <citation type="submission" date="2007-04" db="EMBL/GenBank/DDBJ databases">
        <title>Complete sequence of Pseudomonas mendocina ymp.</title>
        <authorList>
            <consortium name="US DOE Joint Genome Institute"/>
            <person name="Copeland A."/>
            <person name="Lucas S."/>
            <person name="Lapidus A."/>
            <person name="Barry K."/>
            <person name="Glavina del Rio T."/>
            <person name="Dalin E."/>
            <person name="Tice H."/>
            <person name="Pitluck S."/>
            <person name="Kiss H."/>
            <person name="Brettin T."/>
            <person name="Detter J.C."/>
            <person name="Bruce D."/>
            <person name="Han C."/>
            <person name="Schmutz J."/>
            <person name="Larimer F."/>
            <person name="Land M."/>
            <person name="Hauser L."/>
            <person name="Kyrpides N."/>
            <person name="Mikhailova N."/>
            <person name="Hersman L."/>
            <person name="Dubois J."/>
            <person name="Maurice P."/>
            <person name="Richardson P."/>
        </authorList>
    </citation>
    <scope>NUCLEOTIDE SEQUENCE [LARGE SCALE GENOMIC DNA]</scope>
    <source>
        <strain>ymp</strain>
    </source>
</reference>
<gene>
    <name evidence="2" type="primary">betI</name>
    <name type="ordered locus">Pmen_0483</name>
</gene>
<accession>A4XPI7</accession>
<keyword id="KW-0238">DNA-binding</keyword>
<keyword id="KW-0678">Repressor</keyword>
<keyword id="KW-0804">Transcription</keyword>
<keyword id="KW-0805">Transcription regulation</keyword>
<comment type="function">
    <text evidence="1">Repressor involved in the biosynthesis of the osmoprotectant glycine betaine. It represses transcription of the choline transporter BetT and the genes of BetAB involved in the synthesis of glycine betaine (By similarity).</text>
</comment>
<comment type="pathway">
    <text>Amine and polyamine biosynthesis; betaine biosynthesis via choline pathway [regulation].</text>
</comment>
<organism>
    <name type="scientific">Ectopseudomonas mendocina (strain ymp)</name>
    <name type="common">Pseudomonas mendocina</name>
    <dbReference type="NCBI Taxonomy" id="399739"/>
    <lineage>
        <taxon>Bacteria</taxon>
        <taxon>Pseudomonadati</taxon>
        <taxon>Pseudomonadota</taxon>
        <taxon>Gammaproteobacteria</taxon>
        <taxon>Pseudomonadales</taxon>
        <taxon>Pseudomonadaceae</taxon>
        <taxon>Ectopseudomonas</taxon>
    </lineage>
</organism>
<evidence type="ECO:0000250" key="1"/>
<evidence type="ECO:0000255" key="2">
    <source>
        <dbReference type="HAMAP-Rule" id="MF_00768"/>
    </source>
</evidence>
<dbReference type="EMBL" id="CP000680">
    <property type="protein sequence ID" value="ABP83253.1"/>
    <property type="molecule type" value="Genomic_DNA"/>
</dbReference>
<dbReference type="SMR" id="A4XPI7"/>
<dbReference type="STRING" id="399739.Pmen_0483"/>
<dbReference type="KEGG" id="pmy:Pmen_0483"/>
<dbReference type="PATRIC" id="fig|399739.8.peg.492"/>
<dbReference type="eggNOG" id="COG1309">
    <property type="taxonomic scope" value="Bacteria"/>
</dbReference>
<dbReference type="HOGENOM" id="CLU_069356_15_4_6"/>
<dbReference type="OrthoDB" id="7618612at2"/>
<dbReference type="UniPathway" id="UPA00529"/>
<dbReference type="GO" id="GO:0003700">
    <property type="term" value="F:DNA-binding transcription factor activity"/>
    <property type="evidence" value="ECO:0007669"/>
    <property type="project" value="UniProtKB-UniRule"/>
</dbReference>
<dbReference type="GO" id="GO:0000976">
    <property type="term" value="F:transcription cis-regulatory region binding"/>
    <property type="evidence" value="ECO:0007669"/>
    <property type="project" value="TreeGrafter"/>
</dbReference>
<dbReference type="GO" id="GO:0019285">
    <property type="term" value="P:glycine betaine biosynthetic process from choline"/>
    <property type="evidence" value="ECO:0007669"/>
    <property type="project" value="UniProtKB-UniRule"/>
</dbReference>
<dbReference type="GO" id="GO:0045892">
    <property type="term" value="P:negative regulation of DNA-templated transcription"/>
    <property type="evidence" value="ECO:0007669"/>
    <property type="project" value="UniProtKB-UniRule"/>
</dbReference>
<dbReference type="Gene3D" id="1.10.357.10">
    <property type="entry name" value="Tetracycline Repressor, domain 2"/>
    <property type="match status" value="1"/>
</dbReference>
<dbReference type="HAMAP" id="MF_00768">
    <property type="entry name" value="HTH_type_BetI"/>
    <property type="match status" value="1"/>
</dbReference>
<dbReference type="InterPro" id="IPR039538">
    <property type="entry name" value="BetI_C"/>
</dbReference>
<dbReference type="InterPro" id="IPR023772">
    <property type="entry name" value="DNA-bd_HTH_TetR-type_CS"/>
</dbReference>
<dbReference type="InterPro" id="IPR009057">
    <property type="entry name" value="Homeodomain-like_sf"/>
</dbReference>
<dbReference type="InterPro" id="IPR050109">
    <property type="entry name" value="HTH-type_TetR-like_transc_reg"/>
</dbReference>
<dbReference type="InterPro" id="IPR001647">
    <property type="entry name" value="HTH_TetR"/>
</dbReference>
<dbReference type="InterPro" id="IPR036271">
    <property type="entry name" value="Tet_transcr_reg_TetR-rel_C_sf"/>
</dbReference>
<dbReference type="InterPro" id="IPR017757">
    <property type="entry name" value="Tscrpt_rep_BetI"/>
</dbReference>
<dbReference type="NCBIfam" id="TIGR03384">
    <property type="entry name" value="betaine_BetI"/>
    <property type="match status" value="1"/>
</dbReference>
<dbReference type="NCBIfam" id="NF001978">
    <property type="entry name" value="PRK00767.1"/>
    <property type="match status" value="1"/>
</dbReference>
<dbReference type="PANTHER" id="PTHR30055:SF234">
    <property type="entry name" value="HTH-TYPE TRANSCRIPTIONAL REGULATOR BETI"/>
    <property type="match status" value="1"/>
</dbReference>
<dbReference type="PANTHER" id="PTHR30055">
    <property type="entry name" value="HTH-TYPE TRANSCRIPTIONAL REGULATOR RUTR"/>
    <property type="match status" value="1"/>
</dbReference>
<dbReference type="Pfam" id="PF13977">
    <property type="entry name" value="TetR_C_6"/>
    <property type="match status" value="1"/>
</dbReference>
<dbReference type="Pfam" id="PF00440">
    <property type="entry name" value="TetR_N"/>
    <property type="match status" value="1"/>
</dbReference>
<dbReference type="SUPFAM" id="SSF46689">
    <property type="entry name" value="Homeodomain-like"/>
    <property type="match status" value="1"/>
</dbReference>
<dbReference type="SUPFAM" id="SSF48498">
    <property type="entry name" value="Tetracyclin repressor-like, C-terminal domain"/>
    <property type="match status" value="1"/>
</dbReference>
<dbReference type="PROSITE" id="PS01081">
    <property type="entry name" value="HTH_TETR_1"/>
    <property type="match status" value="1"/>
</dbReference>
<dbReference type="PROSITE" id="PS50977">
    <property type="entry name" value="HTH_TETR_2"/>
    <property type="match status" value="1"/>
</dbReference>